<protein>
    <recommendedName>
        <fullName evidence="1">L-rhamnose isomerase</fullName>
        <ecNumber evidence="1">5.3.1.14</ecNumber>
    </recommendedName>
</protein>
<organism>
    <name type="scientific">Salmonella paratyphi C (strain RKS4594)</name>
    <dbReference type="NCBI Taxonomy" id="476213"/>
    <lineage>
        <taxon>Bacteria</taxon>
        <taxon>Pseudomonadati</taxon>
        <taxon>Pseudomonadota</taxon>
        <taxon>Gammaproteobacteria</taxon>
        <taxon>Enterobacterales</taxon>
        <taxon>Enterobacteriaceae</taxon>
        <taxon>Salmonella</taxon>
    </lineage>
</organism>
<comment type="function">
    <text evidence="1">Catalyzes the interconversion of L-rhamnose and L-rhamnulose.</text>
</comment>
<comment type="catalytic activity">
    <reaction evidence="1">
        <text>L-rhamnopyranose = L-rhamnulose</text>
        <dbReference type="Rhea" id="RHEA:23160"/>
        <dbReference type="ChEBI" id="CHEBI:17897"/>
        <dbReference type="ChEBI" id="CHEBI:62346"/>
        <dbReference type="EC" id="5.3.1.14"/>
    </reaction>
</comment>
<comment type="cofactor">
    <cofactor evidence="1">
        <name>Mn(2+)</name>
        <dbReference type="ChEBI" id="CHEBI:29035"/>
    </cofactor>
    <text evidence="1">Binds 1 Mn(2+) ion per subunit.</text>
</comment>
<comment type="pathway">
    <text evidence="1">Carbohydrate degradation; L-rhamnose degradation; glycerone phosphate from L-rhamnose: step 1/3.</text>
</comment>
<comment type="subunit">
    <text evidence="1">Homotetramer.</text>
</comment>
<comment type="subcellular location">
    <subcellularLocation>
        <location evidence="1">Cytoplasm</location>
    </subcellularLocation>
</comment>
<comment type="similarity">
    <text evidence="1">Belongs to the rhamnose isomerase family.</text>
</comment>
<evidence type="ECO:0000255" key="1">
    <source>
        <dbReference type="HAMAP-Rule" id="MF_00541"/>
    </source>
</evidence>
<accession>C0Q3L2</accession>
<dbReference type="EC" id="5.3.1.14" evidence="1"/>
<dbReference type="EMBL" id="CP000857">
    <property type="protein sequence ID" value="ACN48214.1"/>
    <property type="molecule type" value="Genomic_DNA"/>
</dbReference>
<dbReference type="RefSeq" id="WP_000211472.1">
    <property type="nucleotide sequence ID" value="NC_012125.1"/>
</dbReference>
<dbReference type="SMR" id="C0Q3L2"/>
<dbReference type="KEGG" id="sei:SPC_4150"/>
<dbReference type="HOGENOM" id="CLU_052790_0_0_6"/>
<dbReference type="UniPathway" id="UPA00541">
    <property type="reaction ID" value="UER00601"/>
</dbReference>
<dbReference type="Proteomes" id="UP000001599">
    <property type="component" value="Chromosome"/>
</dbReference>
<dbReference type="GO" id="GO:0005737">
    <property type="term" value="C:cytoplasm"/>
    <property type="evidence" value="ECO:0007669"/>
    <property type="project" value="UniProtKB-SubCell"/>
</dbReference>
<dbReference type="GO" id="GO:0008740">
    <property type="term" value="F:L-rhamnose isomerase activity"/>
    <property type="evidence" value="ECO:0007669"/>
    <property type="project" value="UniProtKB-UniRule"/>
</dbReference>
<dbReference type="GO" id="GO:0030145">
    <property type="term" value="F:manganese ion binding"/>
    <property type="evidence" value="ECO:0007669"/>
    <property type="project" value="UniProtKB-UniRule"/>
</dbReference>
<dbReference type="GO" id="GO:0019324">
    <property type="term" value="P:L-lyxose metabolic process"/>
    <property type="evidence" value="ECO:0007669"/>
    <property type="project" value="TreeGrafter"/>
</dbReference>
<dbReference type="GO" id="GO:0019301">
    <property type="term" value="P:rhamnose catabolic process"/>
    <property type="evidence" value="ECO:0007669"/>
    <property type="project" value="UniProtKB-UniRule"/>
</dbReference>
<dbReference type="FunFam" id="3.20.20.150:FF:000006">
    <property type="entry name" value="L-rhamnose isomerase"/>
    <property type="match status" value="1"/>
</dbReference>
<dbReference type="Gene3D" id="3.20.20.150">
    <property type="entry name" value="Divalent-metal-dependent TIM barrel enzymes"/>
    <property type="match status" value="1"/>
</dbReference>
<dbReference type="HAMAP" id="MF_00541">
    <property type="entry name" value="RhaA"/>
    <property type="match status" value="1"/>
</dbReference>
<dbReference type="InterPro" id="IPR050337">
    <property type="entry name" value="L-rhamnose_isomerase"/>
</dbReference>
<dbReference type="InterPro" id="IPR009308">
    <property type="entry name" value="Rhamnose_isomerase"/>
</dbReference>
<dbReference type="InterPro" id="IPR036237">
    <property type="entry name" value="Xyl_isomerase-like_sf"/>
</dbReference>
<dbReference type="NCBIfam" id="NF002203">
    <property type="entry name" value="PRK01076.1"/>
    <property type="match status" value="1"/>
</dbReference>
<dbReference type="NCBIfam" id="TIGR01748">
    <property type="entry name" value="rhaA"/>
    <property type="match status" value="1"/>
</dbReference>
<dbReference type="PANTHER" id="PTHR30268">
    <property type="entry name" value="L-RHAMNOSE ISOMERASE"/>
    <property type="match status" value="1"/>
</dbReference>
<dbReference type="PANTHER" id="PTHR30268:SF0">
    <property type="entry name" value="L-RHAMNOSE ISOMERASE"/>
    <property type="match status" value="1"/>
</dbReference>
<dbReference type="Pfam" id="PF06134">
    <property type="entry name" value="RhaA"/>
    <property type="match status" value="1"/>
</dbReference>
<dbReference type="SUPFAM" id="SSF51658">
    <property type="entry name" value="Xylose isomerase-like"/>
    <property type="match status" value="1"/>
</dbReference>
<keyword id="KW-0963">Cytoplasm</keyword>
<keyword id="KW-0413">Isomerase</keyword>
<keyword id="KW-0464">Manganese</keyword>
<keyword id="KW-0479">Metal-binding</keyword>
<keyword id="KW-0684">Rhamnose metabolism</keyword>
<reference key="1">
    <citation type="journal article" date="2009" name="PLoS ONE">
        <title>Salmonella paratyphi C: genetic divergence from Salmonella choleraesuis and pathogenic convergence with Salmonella typhi.</title>
        <authorList>
            <person name="Liu W.-Q."/>
            <person name="Feng Y."/>
            <person name="Wang Y."/>
            <person name="Zou Q.-H."/>
            <person name="Chen F."/>
            <person name="Guo J.-T."/>
            <person name="Peng Y.-H."/>
            <person name="Jin Y."/>
            <person name="Li Y.-G."/>
            <person name="Hu S.-N."/>
            <person name="Johnston R.N."/>
            <person name="Liu G.-R."/>
            <person name="Liu S.-L."/>
        </authorList>
    </citation>
    <scope>NUCLEOTIDE SEQUENCE [LARGE SCALE GENOMIC DNA]</scope>
    <source>
        <strain>RKS4594</strain>
    </source>
</reference>
<feature type="chain" id="PRO_1000146584" description="L-rhamnose isomerase">
    <location>
        <begin position="1"/>
        <end position="419"/>
    </location>
</feature>
<feature type="binding site" evidence="1">
    <location>
        <position position="262"/>
    </location>
    <ligand>
        <name>Mn(2+)</name>
        <dbReference type="ChEBI" id="CHEBI:29035"/>
    </ligand>
</feature>
<feature type="binding site" evidence="1">
    <location>
        <position position="294"/>
    </location>
    <ligand>
        <name>Mn(2+)</name>
        <dbReference type="ChEBI" id="CHEBI:29035"/>
    </ligand>
</feature>
<feature type="binding site" evidence="1">
    <location>
        <position position="296"/>
    </location>
    <ligand>
        <name>Mn(2+)</name>
        <dbReference type="ChEBI" id="CHEBI:29035"/>
    </ligand>
</feature>
<gene>
    <name evidence="1" type="primary">rhaA</name>
    <name type="ordered locus">SPC_4150</name>
</gene>
<sequence length="419" mass="47457">MTTQLEQAWELAKQRFAAVGIDVEEALRQLDRLPVSMHCWQGDDVAGFENPEGSLTGGIQSTGNYPGKARNATELRADLEQALRLIPGPKRLNLHAIYLESDTPVARDQIKPEHFKNWVEWAKANRLGLDFNPTCFSHPLSADGFTLSHPDAKIRQFWIDHCKASRRVSAYFGEQLGTPSVMNIWIPDGMKDITVDRLAPRQRLLEALDEVISEKFDPAHHIDAVESKLFGIGAESYTVGSNEFYMGYATSRQTALCLDAGHFHPTEVISDKISAAMLYVPRLLLHVSRPVRWDSDHVVLLDDETQAIASEIVRHNLFDRVHIGLDFFDASINRVAAWVIGTRNMKKALLRALLEPTDQLRQLEASGDYTARLALLEEQKSLPWQAVWEMYCQRHDTPTGSQWLDSVRTYEKEILSKRS</sequence>
<proteinExistence type="inferred from homology"/>
<name>RHAA_SALPC</name>